<proteinExistence type="inferred from homology"/>
<gene>
    <name evidence="1" type="primary">ibpB</name>
    <name type="ordered locus">SeD_A4197</name>
</gene>
<protein>
    <recommendedName>
        <fullName evidence="1">Small heat shock protein IbpB</fullName>
    </recommendedName>
    <alternativeName>
        <fullName evidence="1">16 kDa heat shock protein B</fullName>
    </alternativeName>
</protein>
<reference key="1">
    <citation type="journal article" date="2011" name="J. Bacteriol.">
        <title>Comparative genomics of 28 Salmonella enterica isolates: evidence for CRISPR-mediated adaptive sublineage evolution.</title>
        <authorList>
            <person name="Fricke W.F."/>
            <person name="Mammel M.K."/>
            <person name="McDermott P.F."/>
            <person name="Tartera C."/>
            <person name="White D.G."/>
            <person name="Leclerc J.E."/>
            <person name="Ravel J."/>
            <person name="Cebula T.A."/>
        </authorList>
    </citation>
    <scope>NUCLEOTIDE SEQUENCE [LARGE SCALE GENOMIC DNA]</scope>
    <source>
        <strain>CT_02021853</strain>
    </source>
</reference>
<keyword id="KW-0143">Chaperone</keyword>
<keyword id="KW-0963">Cytoplasm</keyword>
<keyword id="KW-0346">Stress response</keyword>
<organism>
    <name type="scientific">Salmonella dublin (strain CT_02021853)</name>
    <dbReference type="NCBI Taxonomy" id="439851"/>
    <lineage>
        <taxon>Bacteria</taxon>
        <taxon>Pseudomonadati</taxon>
        <taxon>Pseudomonadota</taxon>
        <taxon>Gammaproteobacteria</taxon>
        <taxon>Enterobacterales</taxon>
        <taxon>Enterobacteriaceae</taxon>
        <taxon>Salmonella</taxon>
    </lineage>
</organism>
<name>IBPB_SALDC</name>
<accession>B5FMC8</accession>
<comment type="function">
    <text evidence="1">Associates with aggregated proteins, together with IbpA, to stabilize and protect them from irreversible denaturation and extensive proteolysis during heat shock and oxidative stress. Aggregated proteins bound to the IbpAB complex are more efficiently refolded and reactivated by the ATP-dependent chaperone systems ClpB and DnaK/DnaJ/GrpE. Its activity is ATP-independent.</text>
</comment>
<comment type="subunit">
    <text evidence="1">Homodimer. Forms homomultimers of about 100-150 subunits at optimal growth temperatures. Conformation changes to oligomers at high temperatures or high ionic concentrations. The decrease in size of the multimers is accompanied by an increase in chaperone activity.</text>
</comment>
<comment type="subcellular location">
    <subcellularLocation>
        <location evidence="1">Cytoplasm</location>
    </subcellularLocation>
</comment>
<comment type="domain">
    <text evidence="1">The N- and C-terminal flexible termini are involved in oligomerization and in the binding of non-native substrate proteins, and are essential for chaperone activity.</text>
</comment>
<comment type="similarity">
    <text evidence="1 2">Belongs to the small heat shock protein (HSP20) family.</text>
</comment>
<evidence type="ECO:0000255" key="1">
    <source>
        <dbReference type="HAMAP-Rule" id="MF_02001"/>
    </source>
</evidence>
<evidence type="ECO:0000255" key="2">
    <source>
        <dbReference type="PROSITE-ProRule" id="PRU00285"/>
    </source>
</evidence>
<dbReference type="EMBL" id="CP001144">
    <property type="protein sequence ID" value="ACH75601.1"/>
    <property type="molecule type" value="Genomic_DNA"/>
</dbReference>
<dbReference type="RefSeq" id="WP_001246919.1">
    <property type="nucleotide sequence ID" value="NC_011205.1"/>
</dbReference>
<dbReference type="SMR" id="B5FMC8"/>
<dbReference type="KEGG" id="sed:SeD_A4197"/>
<dbReference type="HOGENOM" id="CLU_046737_4_2_6"/>
<dbReference type="Proteomes" id="UP000008322">
    <property type="component" value="Chromosome"/>
</dbReference>
<dbReference type="GO" id="GO:0005737">
    <property type="term" value="C:cytoplasm"/>
    <property type="evidence" value="ECO:0007669"/>
    <property type="project" value="UniProtKB-SubCell"/>
</dbReference>
<dbReference type="GO" id="GO:0050821">
    <property type="term" value="P:protein stabilization"/>
    <property type="evidence" value="ECO:0007669"/>
    <property type="project" value="UniProtKB-UniRule"/>
</dbReference>
<dbReference type="CDD" id="cd06470">
    <property type="entry name" value="ACD_IbpA-B_like"/>
    <property type="match status" value="1"/>
</dbReference>
<dbReference type="Gene3D" id="2.60.40.790">
    <property type="match status" value="1"/>
</dbReference>
<dbReference type="HAMAP" id="MF_02001">
    <property type="entry name" value="HSP20_IbpB"/>
    <property type="match status" value="1"/>
</dbReference>
<dbReference type="InterPro" id="IPR002068">
    <property type="entry name" value="A-crystallin/Hsp20_dom"/>
</dbReference>
<dbReference type="InterPro" id="IPR037913">
    <property type="entry name" value="ACD_IbpA/B"/>
</dbReference>
<dbReference type="InterPro" id="IPR008978">
    <property type="entry name" value="HSP20-like_chaperone"/>
</dbReference>
<dbReference type="InterPro" id="IPR022848">
    <property type="entry name" value="HSP20_IbpB"/>
</dbReference>
<dbReference type="NCBIfam" id="NF008618">
    <property type="entry name" value="PRK11597.1"/>
    <property type="match status" value="1"/>
</dbReference>
<dbReference type="PANTHER" id="PTHR47062">
    <property type="match status" value="1"/>
</dbReference>
<dbReference type="PANTHER" id="PTHR47062:SF2">
    <property type="entry name" value="SMALL HEAT SHOCK PROTEIN IBPB"/>
    <property type="match status" value="1"/>
</dbReference>
<dbReference type="Pfam" id="PF00011">
    <property type="entry name" value="HSP20"/>
    <property type="match status" value="1"/>
</dbReference>
<dbReference type="SUPFAM" id="SSF49764">
    <property type="entry name" value="HSP20-like chaperones"/>
    <property type="match status" value="1"/>
</dbReference>
<dbReference type="PROSITE" id="PS01031">
    <property type="entry name" value="SHSP"/>
    <property type="match status" value="1"/>
</dbReference>
<sequence>MRNYDLSPLLRQWIGFDKLANALQNSGESQSFPPYNIEKSDDNHYRITLALAGFRQEDLDIQLEGTRLTVKGTPEQPENEPKWLHQGLVMQPFSLSFTLAENMEVSGATFTNGLLHIDLTRNEPETIAPQRIAINERSALNS</sequence>
<feature type="chain" id="PRO_1000189108" description="Small heat shock protein IbpB">
    <location>
        <begin position="1"/>
        <end position="142"/>
    </location>
</feature>
<feature type="domain" description="sHSP" evidence="2">
    <location>
        <begin position="26"/>
        <end position="137"/>
    </location>
</feature>